<proteinExistence type="inferred from homology"/>
<sequence>MAKPAKRVAVTGAAGQIAYSLLFRIANGDLLGKDQPVILQLLDLPQAQGAVKGVVMELDDCAFPLLSGVVITDDPKVAFKDADVALLVGARPRSKGMERKDLLSANAEIFTVQGAALNEVASRDVKVLVVGNPANTNAYIAMKSAPDLPKKNFTAMLRLDHNRALSQLAAKSGKPVASIEKLAVWGNHSPTMYPDFRFATAEGESLLKLINDDVWNRDTFIPTVGKRGAAIIEARGLSSAASAANAAIDHVRDWVLGTNGKWVTMGIPSDGSYGIPEDIIYGVPVVCENGEYKRIEGLEIDAFSREKMDGTLAELLEERDGVAHLLKN</sequence>
<accession>Q393V1</accession>
<feature type="initiator methionine" description="Removed" evidence="1">
    <location>
        <position position="1"/>
    </location>
</feature>
<feature type="chain" id="PRO_0000294381" description="Malate dehydrogenase">
    <location>
        <begin position="2"/>
        <end position="328"/>
    </location>
</feature>
<feature type="active site" description="Proton acceptor" evidence="2">
    <location>
        <position position="188"/>
    </location>
</feature>
<feature type="binding site" evidence="2">
    <location>
        <begin position="12"/>
        <end position="18"/>
    </location>
    <ligand>
        <name>NAD(+)</name>
        <dbReference type="ChEBI" id="CHEBI:57540"/>
    </ligand>
</feature>
<feature type="binding site" evidence="2">
    <location>
        <position position="93"/>
    </location>
    <ligand>
        <name>substrate</name>
    </ligand>
</feature>
<feature type="binding site" evidence="2">
    <location>
        <position position="99"/>
    </location>
    <ligand>
        <name>substrate</name>
    </ligand>
</feature>
<feature type="binding site" evidence="2">
    <location>
        <position position="106"/>
    </location>
    <ligand>
        <name>NAD(+)</name>
        <dbReference type="ChEBI" id="CHEBI:57540"/>
    </ligand>
</feature>
<feature type="binding site" evidence="2">
    <location>
        <position position="113"/>
    </location>
    <ligand>
        <name>NAD(+)</name>
        <dbReference type="ChEBI" id="CHEBI:57540"/>
    </ligand>
</feature>
<feature type="binding site" evidence="2">
    <location>
        <begin position="130"/>
        <end position="132"/>
    </location>
    <ligand>
        <name>NAD(+)</name>
        <dbReference type="ChEBI" id="CHEBI:57540"/>
    </ligand>
</feature>
<feature type="binding site" evidence="2">
    <location>
        <position position="132"/>
    </location>
    <ligand>
        <name>substrate</name>
    </ligand>
</feature>
<feature type="binding site" evidence="2">
    <location>
        <position position="163"/>
    </location>
    <ligand>
        <name>substrate</name>
    </ligand>
</feature>
<evidence type="ECO:0000250" key="1"/>
<evidence type="ECO:0000255" key="2">
    <source>
        <dbReference type="HAMAP-Rule" id="MF_01517"/>
    </source>
</evidence>
<name>MDH_BURL3</name>
<organism>
    <name type="scientific">Burkholderia lata (strain ATCC 17760 / DSM 23089 / LMG 22485 / NCIMB 9086 / R18194 / 383)</name>
    <dbReference type="NCBI Taxonomy" id="482957"/>
    <lineage>
        <taxon>Bacteria</taxon>
        <taxon>Pseudomonadati</taxon>
        <taxon>Pseudomonadota</taxon>
        <taxon>Betaproteobacteria</taxon>
        <taxon>Burkholderiales</taxon>
        <taxon>Burkholderiaceae</taxon>
        <taxon>Burkholderia</taxon>
        <taxon>Burkholderia cepacia complex</taxon>
    </lineage>
</organism>
<dbReference type="EC" id="1.1.1.37" evidence="2"/>
<dbReference type="EMBL" id="CP000152">
    <property type="protein sequence ID" value="ABB12265.1"/>
    <property type="molecule type" value="Genomic_DNA"/>
</dbReference>
<dbReference type="RefSeq" id="WP_011355748.1">
    <property type="nucleotide sequence ID" value="NZ_WNDV01000006.1"/>
</dbReference>
<dbReference type="SMR" id="Q393V1"/>
<dbReference type="GeneID" id="45098482"/>
<dbReference type="KEGG" id="bur:Bcep18194_B2154"/>
<dbReference type="PATRIC" id="fig|482957.22.peg.5911"/>
<dbReference type="HOGENOM" id="CLU_040727_2_0_4"/>
<dbReference type="Proteomes" id="UP000002705">
    <property type="component" value="Chromosome 2"/>
</dbReference>
<dbReference type="GO" id="GO:0030060">
    <property type="term" value="F:L-malate dehydrogenase (NAD+) activity"/>
    <property type="evidence" value="ECO:0007669"/>
    <property type="project" value="UniProtKB-UniRule"/>
</dbReference>
<dbReference type="GO" id="GO:0006108">
    <property type="term" value="P:malate metabolic process"/>
    <property type="evidence" value="ECO:0007669"/>
    <property type="project" value="InterPro"/>
</dbReference>
<dbReference type="GO" id="GO:0006099">
    <property type="term" value="P:tricarboxylic acid cycle"/>
    <property type="evidence" value="ECO:0007669"/>
    <property type="project" value="UniProtKB-UniRule"/>
</dbReference>
<dbReference type="CDD" id="cd01338">
    <property type="entry name" value="MDH_chloroplast-like"/>
    <property type="match status" value="1"/>
</dbReference>
<dbReference type="FunFam" id="3.40.50.720:FF:000010">
    <property type="entry name" value="Malate dehydrogenase"/>
    <property type="match status" value="1"/>
</dbReference>
<dbReference type="FunFam" id="3.90.110.10:FF:000002">
    <property type="entry name" value="Malate dehydrogenase"/>
    <property type="match status" value="1"/>
</dbReference>
<dbReference type="Gene3D" id="3.90.110.10">
    <property type="entry name" value="Lactate dehydrogenase/glycoside hydrolase, family 4, C-terminal"/>
    <property type="match status" value="1"/>
</dbReference>
<dbReference type="Gene3D" id="3.40.50.720">
    <property type="entry name" value="NAD(P)-binding Rossmann-like Domain"/>
    <property type="match status" value="1"/>
</dbReference>
<dbReference type="HAMAP" id="MF_01517">
    <property type="entry name" value="Malate_dehydrog_2"/>
    <property type="match status" value="1"/>
</dbReference>
<dbReference type="InterPro" id="IPR001557">
    <property type="entry name" value="L-lactate/malate_DH"/>
</dbReference>
<dbReference type="InterPro" id="IPR022383">
    <property type="entry name" value="Lactate/malate_DH_C"/>
</dbReference>
<dbReference type="InterPro" id="IPR001236">
    <property type="entry name" value="Lactate/malate_DH_N"/>
</dbReference>
<dbReference type="InterPro" id="IPR015955">
    <property type="entry name" value="Lactate_DH/Glyco_Ohase_4_C"/>
</dbReference>
<dbReference type="InterPro" id="IPR010945">
    <property type="entry name" value="Malate_DH_type2"/>
</dbReference>
<dbReference type="InterPro" id="IPR036291">
    <property type="entry name" value="NAD(P)-bd_dom_sf"/>
</dbReference>
<dbReference type="NCBIfam" id="TIGR01759">
    <property type="entry name" value="MalateDH-SF1"/>
    <property type="match status" value="1"/>
</dbReference>
<dbReference type="NCBIfam" id="NF003916">
    <property type="entry name" value="PRK05442.1"/>
    <property type="match status" value="1"/>
</dbReference>
<dbReference type="PANTHER" id="PTHR23382">
    <property type="entry name" value="MALATE DEHYDROGENASE"/>
    <property type="match status" value="1"/>
</dbReference>
<dbReference type="Pfam" id="PF02866">
    <property type="entry name" value="Ldh_1_C"/>
    <property type="match status" value="1"/>
</dbReference>
<dbReference type="Pfam" id="PF00056">
    <property type="entry name" value="Ldh_1_N"/>
    <property type="match status" value="1"/>
</dbReference>
<dbReference type="PIRSF" id="PIRSF000102">
    <property type="entry name" value="Lac_mal_DH"/>
    <property type="match status" value="1"/>
</dbReference>
<dbReference type="SUPFAM" id="SSF56327">
    <property type="entry name" value="LDH C-terminal domain-like"/>
    <property type="match status" value="1"/>
</dbReference>
<dbReference type="SUPFAM" id="SSF51735">
    <property type="entry name" value="NAD(P)-binding Rossmann-fold domains"/>
    <property type="match status" value="1"/>
</dbReference>
<comment type="function">
    <text evidence="2">Catalyzes the reversible oxidation of malate to oxaloacetate.</text>
</comment>
<comment type="catalytic activity">
    <reaction evidence="2">
        <text>(S)-malate + NAD(+) = oxaloacetate + NADH + H(+)</text>
        <dbReference type="Rhea" id="RHEA:21432"/>
        <dbReference type="ChEBI" id="CHEBI:15378"/>
        <dbReference type="ChEBI" id="CHEBI:15589"/>
        <dbReference type="ChEBI" id="CHEBI:16452"/>
        <dbReference type="ChEBI" id="CHEBI:57540"/>
        <dbReference type="ChEBI" id="CHEBI:57945"/>
        <dbReference type="EC" id="1.1.1.37"/>
    </reaction>
</comment>
<comment type="similarity">
    <text evidence="2">Belongs to the LDH/MDH superfamily. MDH type 2 family.</text>
</comment>
<reference key="1">
    <citation type="submission" date="2005-10" db="EMBL/GenBank/DDBJ databases">
        <title>Complete sequence of chromosome 2 of Burkholderia sp. 383.</title>
        <authorList>
            <consortium name="US DOE Joint Genome Institute"/>
            <person name="Copeland A."/>
            <person name="Lucas S."/>
            <person name="Lapidus A."/>
            <person name="Barry K."/>
            <person name="Detter J.C."/>
            <person name="Glavina T."/>
            <person name="Hammon N."/>
            <person name="Israni S."/>
            <person name="Pitluck S."/>
            <person name="Chain P."/>
            <person name="Malfatti S."/>
            <person name="Shin M."/>
            <person name="Vergez L."/>
            <person name="Schmutz J."/>
            <person name="Larimer F."/>
            <person name="Land M."/>
            <person name="Kyrpides N."/>
            <person name="Lykidis A."/>
            <person name="Richardson P."/>
        </authorList>
    </citation>
    <scope>NUCLEOTIDE SEQUENCE [LARGE SCALE GENOMIC DNA]</scope>
    <source>
        <strain>ATCC 17760 / DSM 23089 / LMG 22485 / NCIMB 9086 / R18194 / 383</strain>
    </source>
</reference>
<keyword id="KW-0520">NAD</keyword>
<keyword id="KW-0560">Oxidoreductase</keyword>
<keyword id="KW-0816">Tricarboxylic acid cycle</keyword>
<protein>
    <recommendedName>
        <fullName evidence="2">Malate dehydrogenase</fullName>
        <ecNumber evidence="2">1.1.1.37</ecNumber>
    </recommendedName>
</protein>
<gene>
    <name evidence="2" type="primary">mdh</name>
    <name type="ordered locus">Bcep18194_B2154</name>
</gene>